<protein>
    <recommendedName>
        <fullName evidence="1">Urease accessory protein UreG</fullName>
    </recommendedName>
</protein>
<organism>
    <name type="scientific">Shewanella halifaxensis (strain HAW-EB4)</name>
    <dbReference type="NCBI Taxonomy" id="458817"/>
    <lineage>
        <taxon>Bacteria</taxon>
        <taxon>Pseudomonadati</taxon>
        <taxon>Pseudomonadota</taxon>
        <taxon>Gammaproteobacteria</taxon>
        <taxon>Alteromonadales</taxon>
        <taxon>Shewanellaceae</taxon>
        <taxon>Shewanella</taxon>
    </lineage>
</organism>
<feature type="chain" id="PRO_0000347446" description="Urease accessory protein UreG">
    <location>
        <begin position="1"/>
        <end position="207"/>
    </location>
</feature>
<feature type="binding site" evidence="1">
    <location>
        <begin position="16"/>
        <end position="23"/>
    </location>
    <ligand>
        <name>GTP</name>
        <dbReference type="ChEBI" id="CHEBI:37565"/>
    </ligand>
</feature>
<proteinExistence type="inferred from homology"/>
<evidence type="ECO:0000255" key="1">
    <source>
        <dbReference type="HAMAP-Rule" id="MF_01389"/>
    </source>
</evidence>
<dbReference type="EMBL" id="CP000931">
    <property type="protein sequence ID" value="ABZ78015.1"/>
    <property type="molecule type" value="Genomic_DNA"/>
</dbReference>
<dbReference type="RefSeq" id="WP_012278535.1">
    <property type="nucleotide sequence ID" value="NC_010334.1"/>
</dbReference>
<dbReference type="SMR" id="B0TT74"/>
<dbReference type="STRING" id="458817.Shal_3470"/>
<dbReference type="KEGG" id="shl:Shal_3470"/>
<dbReference type="eggNOG" id="COG0378">
    <property type="taxonomic scope" value="Bacteria"/>
</dbReference>
<dbReference type="HOGENOM" id="CLU_072144_1_0_6"/>
<dbReference type="OrthoDB" id="9802035at2"/>
<dbReference type="Proteomes" id="UP000001317">
    <property type="component" value="Chromosome"/>
</dbReference>
<dbReference type="GO" id="GO:0005737">
    <property type="term" value="C:cytoplasm"/>
    <property type="evidence" value="ECO:0007669"/>
    <property type="project" value="UniProtKB-SubCell"/>
</dbReference>
<dbReference type="GO" id="GO:0005525">
    <property type="term" value="F:GTP binding"/>
    <property type="evidence" value="ECO:0007669"/>
    <property type="project" value="UniProtKB-KW"/>
</dbReference>
<dbReference type="GO" id="GO:0003924">
    <property type="term" value="F:GTPase activity"/>
    <property type="evidence" value="ECO:0007669"/>
    <property type="project" value="InterPro"/>
</dbReference>
<dbReference type="GO" id="GO:0016151">
    <property type="term" value="F:nickel cation binding"/>
    <property type="evidence" value="ECO:0007669"/>
    <property type="project" value="UniProtKB-UniRule"/>
</dbReference>
<dbReference type="GO" id="GO:0043419">
    <property type="term" value="P:urea catabolic process"/>
    <property type="evidence" value="ECO:0007669"/>
    <property type="project" value="InterPro"/>
</dbReference>
<dbReference type="CDD" id="cd05540">
    <property type="entry name" value="UreG"/>
    <property type="match status" value="1"/>
</dbReference>
<dbReference type="FunFam" id="3.40.50.300:FF:000208">
    <property type="entry name" value="Urease accessory protein UreG"/>
    <property type="match status" value="1"/>
</dbReference>
<dbReference type="Gene3D" id="3.40.50.300">
    <property type="entry name" value="P-loop containing nucleotide triphosphate hydrolases"/>
    <property type="match status" value="1"/>
</dbReference>
<dbReference type="HAMAP" id="MF_01389">
    <property type="entry name" value="UreG"/>
    <property type="match status" value="1"/>
</dbReference>
<dbReference type="InterPro" id="IPR003495">
    <property type="entry name" value="CobW/HypB/UreG_nucleotide-bd"/>
</dbReference>
<dbReference type="InterPro" id="IPR027417">
    <property type="entry name" value="P-loop_NTPase"/>
</dbReference>
<dbReference type="InterPro" id="IPR004400">
    <property type="entry name" value="UreG"/>
</dbReference>
<dbReference type="NCBIfam" id="TIGR00101">
    <property type="entry name" value="ureG"/>
    <property type="match status" value="1"/>
</dbReference>
<dbReference type="PANTHER" id="PTHR31715">
    <property type="entry name" value="UREASE ACCESSORY PROTEIN G"/>
    <property type="match status" value="1"/>
</dbReference>
<dbReference type="PANTHER" id="PTHR31715:SF0">
    <property type="entry name" value="UREASE ACCESSORY PROTEIN G"/>
    <property type="match status" value="1"/>
</dbReference>
<dbReference type="Pfam" id="PF02492">
    <property type="entry name" value="cobW"/>
    <property type="match status" value="1"/>
</dbReference>
<dbReference type="PIRSF" id="PIRSF005624">
    <property type="entry name" value="Ni-bind_GTPase"/>
    <property type="match status" value="1"/>
</dbReference>
<dbReference type="SUPFAM" id="SSF52540">
    <property type="entry name" value="P-loop containing nucleoside triphosphate hydrolases"/>
    <property type="match status" value="1"/>
</dbReference>
<keyword id="KW-0143">Chaperone</keyword>
<keyword id="KW-0963">Cytoplasm</keyword>
<keyword id="KW-0342">GTP-binding</keyword>
<keyword id="KW-0996">Nickel insertion</keyword>
<keyword id="KW-0547">Nucleotide-binding</keyword>
<gene>
    <name evidence="1" type="primary">ureG</name>
    <name type="ordered locus">Shal_3470</name>
</gene>
<comment type="function">
    <text evidence="1">Facilitates the functional incorporation of the urease nickel metallocenter. This process requires GTP hydrolysis, probably effectuated by UreG.</text>
</comment>
<comment type="subunit">
    <text evidence="1">Homodimer. UreD, UreF and UreG form a complex that acts as a GTP-hydrolysis-dependent molecular chaperone, activating the urease apoprotein by helping to assemble the nickel containing metallocenter of UreC. The UreE protein probably delivers the nickel.</text>
</comment>
<comment type="subcellular location">
    <subcellularLocation>
        <location evidence="1">Cytoplasm</location>
    </subcellularLocation>
</comment>
<comment type="similarity">
    <text evidence="1">Belongs to the SIMIBI class G3E GTPase family. UreG subfamily.</text>
</comment>
<accession>B0TT74</accession>
<reference key="1">
    <citation type="submission" date="2008-01" db="EMBL/GenBank/DDBJ databases">
        <title>Complete sequence of Shewanella halifaxensis HAW-EB4.</title>
        <authorList>
            <consortium name="US DOE Joint Genome Institute"/>
            <person name="Copeland A."/>
            <person name="Lucas S."/>
            <person name="Lapidus A."/>
            <person name="Glavina del Rio T."/>
            <person name="Dalin E."/>
            <person name="Tice H."/>
            <person name="Bruce D."/>
            <person name="Goodwin L."/>
            <person name="Pitluck S."/>
            <person name="Sims D."/>
            <person name="Brettin T."/>
            <person name="Detter J.C."/>
            <person name="Han C."/>
            <person name="Kuske C.R."/>
            <person name="Schmutz J."/>
            <person name="Larimer F."/>
            <person name="Land M."/>
            <person name="Hauser L."/>
            <person name="Kyrpides N."/>
            <person name="Kim E."/>
            <person name="Zhao J.-S."/>
            <person name="Richardson P."/>
        </authorList>
    </citation>
    <scope>NUCLEOTIDE SEQUENCE [LARGE SCALE GENOMIC DNA]</scope>
    <source>
        <strain>HAW-EB4</strain>
    </source>
</reference>
<name>UREG_SHEHH</name>
<sequence>MTELEYKQPLRIGVGGPVGSGKTALLEVLCKALRNKYQIAVVTNDIYTQEDAKILTRAEALDADRIIGVETGGCPHTAIREDASMNLAAVEELAKRHKNLDVVFVESGGDNLSATFSPELADLTIYVIDVAEGEKIPRKGGPGITRSDLLIINKIDLAPYVGASLVVMDQDTKRMRPEKPYIFTNMKTGKGVPEILTFIETAGMLNI</sequence>